<proteinExistence type="evidence at transcript level"/>
<accession>Q2R2Z0</accession>
<accession>Q0IS96</accession>
<feature type="chain" id="PRO_0000413230" description="Glutamyl-tRNA(Gln) amidotransferase subunit B, chloroplastic/mitochondrial">
    <location>
        <begin position="1"/>
        <end position="544"/>
    </location>
</feature>
<organism>
    <name type="scientific">Oryza sativa subsp. japonica</name>
    <name type="common">Rice</name>
    <dbReference type="NCBI Taxonomy" id="39947"/>
    <lineage>
        <taxon>Eukaryota</taxon>
        <taxon>Viridiplantae</taxon>
        <taxon>Streptophyta</taxon>
        <taxon>Embryophyta</taxon>
        <taxon>Tracheophyta</taxon>
        <taxon>Spermatophyta</taxon>
        <taxon>Magnoliopsida</taxon>
        <taxon>Liliopsida</taxon>
        <taxon>Poales</taxon>
        <taxon>Poaceae</taxon>
        <taxon>BOP clade</taxon>
        <taxon>Oryzoideae</taxon>
        <taxon>Oryzeae</taxon>
        <taxon>Oryzinae</taxon>
        <taxon>Oryza</taxon>
        <taxon>Oryza sativa</taxon>
    </lineage>
</organism>
<sequence length="544" mass="60097">MALTLLRGMRTPVVARRNAGLFFTTLQSPLLSRFTMRAESARAAAPKSIQLATKEAAEQKAQGFEAVIGIETHVQLSTVTKAFCSCPYSYGSQPNSTVCPTCMGHPGTLPVLNAKVVECAVRLGLALNCEIAMTSKFDRKQYFYPDLPKGYQISQFDIPIAKEGYLDLDLPVEFGGGHRRFGVTRVHMEEDAGKLLHSESGSYSQVDLNRAGVPLLEIVSEPDMRTGIEAAEYGAELQRLVRYLGVSNGNMQEGSLRCDVNVSVRPIGQSNFGTKVEIKNMNSFSAISRAIDYEISRQILLHKEGQADQIVQETRLWDESSQKTFTMRKKEGLADYRYFPEPDLPEVVLTSEYIDEIQNSMPELPEAKRRRFENMGLSMQDVLFLANDDNVARFFDSTLEHGADAKLAANWIMGDIAAYLKNEKLSIDEIKLTPLELSELIASIRNGTISGKIGKEILIELIAKGGTVKSVIEEKDLVQIADPAAIEAMVDQVLADNPKQLEQYRSGKTKLQGFFAGQVMKASKGKANPVLLNKILGEKLKANS</sequence>
<keyword id="KW-0067">ATP-binding</keyword>
<keyword id="KW-0150">Chloroplast</keyword>
<keyword id="KW-0436">Ligase</keyword>
<keyword id="KW-0496">Mitochondrion</keyword>
<keyword id="KW-0547">Nucleotide-binding</keyword>
<keyword id="KW-0934">Plastid</keyword>
<keyword id="KW-0648">Protein biosynthesis</keyword>
<keyword id="KW-1185">Reference proteome</keyword>
<evidence type="ECO:0000255" key="1">
    <source>
        <dbReference type="HAMAP-Rule" id="MF_03147"/>
    </source>
</evidence>
<gene>
    <name evidence="1" type="primary">GATB</name>
    <name type="ordered locus">Os11g0544800</name>
    <name type="ordered locus">LOC_Os11g34210</name>
    <name type="ORF">OsJ_34183</name>
</gene>
<name>GATB_ORYSJ</name>
<reference key="1">
    <citation type="journal article" date="2005" name="BMC Biol.">
        <title>The sequence of rice chromosomes 11 and 12, rich in disease resistance genes and recent gene duplications.</title>
        <authorList>
            <consortium name="The rice chromosomes 11 and 12 sequencing consortia"/>
        </authorList>
    </citation>
    <scope>NUCLEOTIDE SEQUENCE [LARGE SCALE GENOMIC DNA]</scope>
    <source>
        <strain>cv. Nipponbare</strain>
    </source>
</reference>
<reference key="2">
    <citation type="journal article" date="2005" name="Nature">
        <title>The map-based sequence of the rice genome.</title>
        <authorList>
            <consortium name="International rice genome sequencing project (IRGSP)"/>
        </authorList>
    </citation>
    <scope>NUCLEOTIDE SEQUENCE [LARGE SCALE GENOMIC DNA]</scope>
    <source>
        <strain>cv. Nipponbare</strain>
    </source>
</reference>
<reference key="3">
    <citation type="journal article" date="2008" name="Nucleic Acids Res.">
        <title>The rice annotation project database (RAP-DB): 2008 update.</title>
        <authorList>
            <consortium name="The rice annotation project (RAP)"/>
        </authorList>
    </citation>
    <scope>GENOME REANNOTATION</scope>
    <source>
        <strain>cv. Nipponbare</strain>
    </source>
</reference>
<reference key="4">
    <citation type="journal article" date="2013" name="Rice">
        <title>Improvement of the Oryza sativa Nipponbare reference genome using next generation sequence and optical map data.</title>
        <authorList>
            <person name="Kawahara Y."/>
            <person name="de la Bastide M."/>
            <person name="Hamilton J.P."/>
            <person name="Kanamori H."/>
            <person name="McCombie W.R."/>
            <person name="Ouyang S."/>
            <person name="Schwartz D.C."/>
            <person name="Tanaka T."/>
            <person name="Wu J."/>
            <person name="Zhou S."/>
            <person name="Childs K.L."/>
            <person name="Davidson R.M."/>
            <person name="Lin H."/>
            <person name="Quesada-Ocampo L."/>
            <person name="Vaillancourt B."/>
            <person name="Sakai H."/>
            <person name="Lee S.S."/>
            <person name="Kim J."/>
            <person name="Numa H."/>
            <person name="Itoh T."/>
            <person name="Buell C.R."/>
            <person name="Matsumoto T."/>
        </authorList>
    </citation>
    <scope>GENOME REANNOTATION</scope>
    <source>
        <strain>cv. Nipponbare</strain>
    </source>
</reference>
<reference key="5">
    <citation type="journal article" date="2005" name="PLoS Biol.">
        <title>The genomes of Oryza sativa: a history of duplications.</title>
        <authorList>
            <person name="Yu J."/>
            <person name="Wang J."/>
            <person name="Lin W."/>
            <person name="Li S."/>
            <person name="Li H."/>
            <person name="Zhou J."/>
            <person name="Ni P."/>
            <person name="Dong W."/>
            <person name="Hu S."/>
            <person name="Zeng C."/>
            <person name="Zhang J."/>
            <person name="Zhang Y."/>
            <person name="Li R."/>
            <person name="Xu Z."/>
            <person name="Li S."/>
            <person name="Li X."/>
            <person name="Zheng H."/>
            <person name="Cong L."/>
            <person name="Lin L."/>
            <person name="Yin J."/>
            <person name="Geng J."/>
            <person name="Li G."/>
            <person name="Shi J."/>
            <person name="Liu J."/>
            <person name="Lv H."/>
            <person name="Li J."/>
            <person name="Wang J."/>
            <person name="Deng Y."/>
            <person name="Ran L."/>
            <person name="Shi X."/>
            <person name="Wang X."/>
            <person name="Wu Q."/>
            <person name="Li C."/>
            <person name="Ren X."/>
            <person name="Wang J."/>
            <person name="Wang X."/>
            <person name="Li D."/>
            <person name="Liu D."/>
            <person name="Zhang X."/>
            <person name="Ji Z."/>
            <person name="Zhao W."/>
            <person name="Sun Y."/>
            <person name="Zhang Z."/>
            <person name="Bao J."/>
            <person name="Han Y."/>
            <person name="Dong L."/>
            <person name="Ji J."/>
            <person name="Chen P."/>
            <person name="Wu S."/>
            <person name="Liu J."/>
            <person name="Xiao Y."/>
            <person name="Bu D."/>
            <person name="Tan J."/>
            <person name="Yang L."/>
            <person name="Ye C."/>
            <person name="Zhang J."/>
            <person name="Xu J."/>
            <person name="Zhou Y."/>
            <person name="Yu Y."/>
            <person name="Zhang B."/>
            <person name="Zhuang S."/>
            <person name="Wei H."/>
            <person name="Liu B."/>
            <person name="Lei M."/>
            <person name="Yu H."/>
            <person name="Li Y."/>
            <person name="Xu H."/>
            <person name="Wei S."/>
            <person name="He X."/>
            <person name="Fang L."/>
            <person name="Zhang Z."/>
            <person name="Zhang Y."/>
            <person name="Huang X."/>
            <person name="Su Z."/>
            <person name="Tong W."/>
            <person name="Li J."/>
            <person name="Tong Z."/>
            <person name="Li S."/>
            <person name="Ye J."/>
            <person name="Wang L."/>
            <person name="Fang L."/>
            <person name="Lei T."/>
            <person name="Chen C.-S."/>
            <person name="Chen H.-C."/>
            <person name="Xu Z."/>
            <person name="Li H."/>
            <person name="Huang H."/>
            <person name="Zhang F."/>
            <person name="Xu H."/>
            <person name="Li N."/>
            <person name="Zhao C."/>
            <person name="Li S."/>
            <person name="Dong L."/>
            <person name="Huang Y."/>
            <person name="Li L."/>
            <person name="Xi Y."/>
            <person name="Qi Q."/>
            <person name="Li W."/>
            <person name="Zhang B."/>
            <person name="Hu W."/>
            <person name="Zhang Y."/>
            <person name="Tian X."/>
            <person name="Jiao Y."/>
            <person name="Liang X."/>
            <person name="Jin J."/>
            <person name="Gao L."/>
            <person name="Zheng W."/>
            <person name="Hao B."/>
            <person name="Liu S.-M."/>
            <person name="Wang W."/>
            <person name="Yuan L."/>
            <person name="Cao M."/>
            <person name="McDermott J."/>
            <person name="Samudrala R."/>
            <person name="Wang J."/>
            <person name="Wong G.K.-S."/>
            <person name="Yang H."/>
        </authorList>
    </citation>
    <scope>NUCLEOTIDE SEQUENCE [LARGE SCALE GENOMIC DNA]</scope>
    <source>
        <strain>cv. Nipponbare</strain>
    </source>
</reference>
<reference key="6">
    <citation type="journal article" date="2003" name="Science">
        <title>Collection, mapping, and annotation of over 28,000 cDNA clones from japonica rice.</title>
        <authorList>
            <consortium name="The rice full-length cDNA consortium"/>
        </authorList>
    </citation>
    <scope>NUCLEOTIDE SEQUENCE [LARGE SCALE MRNA]</scope>
    <source>
        <strain>cv. Nipponbare</strain>
    </source>
</reference>
<dbReference type="EC" id="6.3.5.-" evidence="1"/>
<dbReference type="EMBL" id="DP000010">
    <property type="protein sequence ID" value="ABA94201.1"/>
    <property type="molecule type" value="Genomic_DNA"/>
</dbReference>
<dbReference type="EMBL" id="AP008217">
    <property type="protein sequence ID" value="BAF28419.2"/>
    <property type="molecule type" value="Genomic_DNA"/>
</dbReference>
<dbReference type="EMBL" id="AP014967">
    <property type="status" value="NOT_ANNOTATED_CDS"/>
    <property type="molecule type" value="Genomic_DNA"/>
</dbReference>
<dbReference type="EMBL" id="CM000148">
    <property type="protein sequence ID" value="EAZ18664.1"/>
    <property type="molecule type" value="Genomic_DNA"/>
</dbReference>
<dbReference type="EMBL" id="AK064895">
    <property type="protein sequence ID" value="BAG89266.1"/>
    <property type="molecule type" value="mRNA"/>
</dbReference>
<dbReference type="RefSeq" id="XP_015615285.1">
    <property type="nucleotide sequence ID" value="XM_015759799.1"/>
</dbReference>
<dbReference type="RefSeq" id="XP_015615286.1">
    <property type="nucleotide sequence ID" value="XM_015759800.1"/>
</dbReference>
<dbReference type="SMR" id="Q2R2Z0"/>
<dbReference type="FunCoup" id="Q2R2Z0">
    <property type="interactions" value="1586"/>
</dbReference>
<dbReference type="STRING" id="39947.Q2R2Z0"/>
<dbReference type="PaxDb" id="39947-Q2R2Z0"/>
<dbReference type="EnsemblPlants" id="Os11t0544800-01">
    <property type="protein sequence ID" value="Os11t0544800-01"/>
    <property type="gene ID" value="Os11g0544800"/>
</dbReference>
<dbReference type="Gramene" id="Os11t0544800-01">
    <property type="protein sequence ID" value="Os11t0544800-01"/>
    <property type="gene ID" value="Os11g0544800"/>
</dbReference>
<dbReference type="KEGG" id="dosa:Os11g0544800"/>
<dbReference type="eggNOG" id="KOG2438">
    <property type="taxonomic scope" value="Eukaryota"/>
</dbReference>
<dbReference type="HOGENOM" id="CLU_019240_0_0_1"/>
<dbReference type="InParanoid" id="Q2R2Z0"/>
<dbReference type="OrthoDB" id="1722066at2759"/>
<dbReference type="PlantReactome" id="R-OSA-9030654">
    <property type="pathway name" value="Primary root development"/>
</dbReference>
<dbReference type="Proteomes" id="UP000000763">
    <property type="component" value="Chromosome 11"/>
</dbReference>
<dbReference type="Proteomes" id="UP000007752">
    <property type="component" value="Chromosome 11"/>
</dbReference>
<dbReference type="Proteomes" id="UP000059680">
    <property type="component" value="Chromosome 11"/>
</dbReference>
<dbReference type="GO" id="GO:0009507">
    <property type="term" value="C:chloroplast"/>
    <property type="evidence" value="ECO:0007669"/>
    <property type="project" value="UniProtKB-SubCell"/>
</dbReference>
<dbReference type="GO" id="GO:0030956">
    <property type="term" value="C:glutamyl-tRNA(Gln) amidotransferase complex"/>
    <property type="evidence" value="ECO:0007669"/>
    <property type="project" value="UniProtKB-UniRule"/>
</dbReference>
<dbReference type="GO" id="GO:0005739">
    <property type="term" value="C:mitochondrion"/>
    <property type="evidence" value="ECO:0007669"/>
    <property type="project" value="UniProtKB-SubCell"/>
</dbReference>
<dbReference type="GO" id="GO:0005524">
    <property type="term" value="F:ATP binding"/>
    <property type="evidence" value="ECO:0007669"/>
    <property type="project" value="UniProtKB-KW"/>
</dbReference>
<dbReference type="GO" id="GO:0050567">
    <property type="term" value="F:glutaminyl-tRNA synthase (glutamine-hydrolyzing) activity"/>
    <property type="evidence" value="ECO:0000318"/>
    <property type="project" value="GO_Central"/>
</dbReference>
<dbReference type="GO" id="GO:0070681">
    <property type="term" value="P:glutaminyl-tRNAGln biosynthesis via transamidation"/>
    <property type="evidence" value="ECO:0000318"/>
    <property type="project" value="GO_Central"/>
</dbReference>
<dbReference type="GO" id="GO:0032543">
    <property type="term" value="P:mitochondrial translation"/>
    <property type="evidence" value="ECO:0007669"/>
    <property type="project" value="UniProtKB-UniRule"/>
</dbReference>
<dbReference type="FunFam" id="1.10.10.410:FF:000001">
    <property type="entry name" value="Aspartyl/glutamyl-tRNA(Asn/Gln) amidotransferase subunit B"/>
    <property type="match status" value="1"/>
</dbReference>
<dbReference type="FunFam" id="1.10.150.380:FF:000001">
    <property type="entry name" value="Aspartyl/glutamyl-tRNA(Asn/Gln) amidotransferase subunit B"/>
    <property type="match status" value="1"/>
</dbReference>
<dbReference type="Gene3D" id="1.10.10.410">
    <property type="match status" value="1"/>
</dbReference>
<dbReference type="Gene3D" id="1.10.150.380">
    <property type="entry name" value="GatB domain, N-terminal subdomain"/>
    <property type="match status" value="1"/>
</dbReference>
<dbReference type="HAMAP" id="MF_00121">
    <property type="entry name" value="GatB"/>
    <property type="match status" value="1"/>
</dbReference>
<dbReference type="InterPro" id="IPR017959">
    <property type="entry name" value="Asn/Gln-tRNA_amidoTrfase_suB/E"/>
</dbReference>
<dbReference type="InterPro" id="IPR006075">
    <property type="entry name" value="Asn/Gln-tRNA_Trfase_suB/E_cat"/>
</dbReference>
<dbReference type="InterPro" id="IPR018027">
    <property type="entry name" value="Asn/Gln_amidotransferase"/>
</dbReference>
<dbReference type="InterPro" id="IPR003789">
    <property type="entry name" value="Asn/Gln_tRNA_amidoTrase-B-like"/>
</dbReference>
<dbReference type="InterPro" id="IPR004413">
    <property type="entry name" value="GatB"/>
</dbReference>
<dbReference type="InterPro" id="IPR042114">
    <property type="entry name" value="GatB_C_1"/>
</dbReference>
<dbReference type="InterPro" id="IPR023168">
    <property type="entry name" value="GatB_Yqey_C_2"/>
</dbReference>
<dbReference type="InterPro" id="IPR017958">
    <property type="entry name" value="Gln-tRNA_amidoTrfase_suB_CS"/>
</dbReference>
<dbReference type="InterPro" id="IPR014746">
    <property type="entry name" value="Gln_synth/guanido_kin_cat_dom"/>
</dbReference>
<dbReference type="NCBIfam" id="TIGR00133">
    <property type="entry name" value="gatB"/>
    <property type="match status" value="1"/>
</dbReference>
<dbReference type="NCBIfam" id="NF004012">
    <property type="entry name" value="PRK05477.1-2"/>
    <property type="match status" value="1"/>
</dbReference>
<dbReference type="NCBIfam" id="NF004014">
    <property type="entry name" value="PRK05477.1-4"/>
    <property type="match status" value="1"/>
</dbReference>
<dbReference type="PANTHER" id="PTHR11659">
    <property type="entry name" value="GLUTAMYL-TRNA GLN AMIDOTRANSFERASE SUBUNIT B MITOCHONDRIAL AND PROKARYOTIC PET112-RELATED"/>
    <property type="match status" value="1"/>
</dbReference>
<dbReference type="PANTHER" id="PTHR11659:SF0">
    <property type="entry name" value="GLUTAMYL-TRNA(GLN) AMIDOTRANSFERASE SUBUNIT B, MITOCHONDRIAL"/>
    <property type="match status" value="1"/>
</dbReference>
<dbReference type="Pfam" id="PF02934">
    <property type="entry name" value="GatB_N"/>
    <property type="match status" value="1"/>
</dbReference>
<dbReference type="Pfam" id="PF02637">
    <property type="entry name" value="GatB_Yqey"/>
    <property type="match status" value="1"/>
</dbReference>
<dbReference type="SMART" id="SM00845">
    <property type="entry name" value="GatB_Yqey"/>
    <property type="match status" value="1"/>
</dbReference>
<dbReference type="SUPFAM" id="SSF89095">
    <property type="entry name" value="GatB/YqeY motif"/>
    <property type="match status" value="1"/>
</dbReference>
<dbReference type="SUPFAM" id="SSF55931">
    <property type="entry name" value="Glutamine synthetase/guanido kinase"/>
    <property type="match status" value="1"/>
</dbReference>
<dbReference type="PROSITE" id="PS01234">
    <property type="entry name" value="GATB"/>
    <property type="match status" value="1"/>
</dbReference>
<protein>
    <recommendedName>
        <fullName evidence="1">Glutamyl-tRNA(Gln) amidotransferase subunit B, chloroplastic/mitochondrial</fullName>
        <shortName evidence="1">Glu-AdT subunit B</shortName>
        <ecNumber evidence="1">6.3.5.-</ecNumber>
    </recommendedName>
</protein>
<comment type="function">
    <text evidence="1">Allows the formation of correctly charged Gln-tRNA(Gln) through the transamidation of misacylated Glu-tRNA(Gln) in chloroplasts and mitochondria. The reaction takes place in the presence of glutamine and ATP through an activated gamma-phospho-Glu-tRNA(Gln).</text>
</comment>
<comment type="catalytic activity">
    <reaction evidence="1">
        <text>L-glutamyl-tRNA(Gln) + L-glutamine + ATP + H2O = L-glutaminyl-tRNA(Gln) + L-glutamate + ADP + phosphate + H(+)</text>
        <dbReference type="Rhea" id="RHEA:17521"/>
        <dbReference type="Rhea" id="RHEA-COMP:9681"/>
        <dbReference type="Rhea" id="RHEA-COMP:9684"/>
        <dbReference type="ChEBI" id="CHEBI:15377"/>
        <dbReference type="ChEBI" id="CHEBI:15378"/>
        <dbReference type="ChEBI" id="CHEBI:29985"/>
        <dbReference type="ChEBI" id="CHEBI:30616"/>
        <dbReference type="ChEBI" id="CHEBI:43474"/>
        <dbReference type="ChEBI" id="CHEBI:58359"/>
        <dbReference type="ChEBI" id="CHEBI:78520"/>
        <dbReference type="ChEBI" id="CHEBI:78521"/>
        <dbReference type="ChEBI" id="CHEBI:456216"/>
    </reaction>
</comment>
<comment type="subunit">
    <text evidence="1">Subunit of the heterotrimeric GatCAB amidotransferase (AdT) complex, composed of A, B and C subunits.</text>
</comment>
<comment type="subcellular location">
    <subcellularLocation>
        <location evidence="1">Mitochondrion</location>
    </subcellularLocation>
    <subcellularLocation>
        <location evidence="1">Plastid</location>
        <location evidence="1">Chloroplast</location>
    </subcellularLocation>
</comment>
<comment type="miscellaneous">
    <text evidence="1">This protein may be expected to contain an N-terminal transit peptide but none has been predicted.</text>
</comment>
<comment type="similarity">
    <text evidence="1">Belongs to the GatB/GatE family. GatB subfamily.</text>
</comment>